<comment type="function">
    <text evidence="1">Catalyzes the transfer of a dimethylallyl group onto the adenine at position 37 in tRNAs that read codons beginning with uridine, leading to the formation of N6-(dimethylallyl)adenosine (i(6)A).</text>
</comment>
<comment type="catalytic activity">
    <reaction evidence="1">
        <text>adenosine(37) in tRNA + dimethylallyl diphosphate = N(6)-dimethylallyladenosine(37) in tRNA + diphosphate</text>
        <dbReference type="Rhea" id="RHEA:26482"/>
        <dbReference type="Rhea" id="RHEA-COMP:10162"/>
        <dbReference type="Rhea" id="RHEA-COMP:10375"/>
        <dbReference type="ChEBI" id="CHEBI:33019"/>
        <dbReference type="ChEBI" id="CHEBI:57623"/>
        <dbReference type="ChEBI" id="CHEBI:74411"/>
        <dbReference type="ChEBI" id="CHEBI:74415"/>
        <dbReference type="EC" id="2.5.1.75"/>
    </reaction>
</comment>
<comment type="cofactor">
    <cofactor evidence="1">
        <name>Mg(2+)</name>
        <dbReference type="ChEBI" id="CHEBI:18420"/>
    </cofactor>
</comment>
<comment type="subunit">
    <text evidence="1">Monomer.</text>
</comment>
<comment type="similarity">
    <text evidence="1">Belongs to the IPP transferase family.</text>
</comment>
<name>MIAA_CLOTE</name>
<feature type="chain" id="PRO_0000163905" description="tRNA dimethylallyltransferase">
    <location>
        <begin position="1"/>
        <end position="314"/>
    </location>
</feature>
<feature type="region of interest" description="Interaction with substrate tRNA" evidence="1">
    <location>
        <begin position="34"/>
        <end position="37"/>
    </location>
</feature>
<feature type="binding site" evidence="1">
    <location>
        <begin position="9"/>
        <end position="16"/>
    </location>
    <ligand>
        <name>ATP</name>
        <dbReference type="ChEBI" id="CHEBI:30616"/>
    </ligand>
</feature>
<feature type="binding site" evidence="1">
    <location>
        <begin position="11"/>
        <end position="16"/>
    </location>
    <ligand>
        <name>substrate</name>
    </ligand>
</feature>
<feature type="site" description="Interaction with substrate tRNA" evidence="1">
    <location>
        <position position="100"/>
    </location>
</feature>
<feature type="site" description="Interaction with substrate tRNA" evidence="1">
    <location>
        <position position="123"/>
    </location>
</feature>
<sequence>MKDLFILSGPTAVGKTEISLNLAKALRGEVISSDSMQIYKHMDIGSAKIFEEERQGIPHHLIDVVEPWENFSVAEYKNIAENKIEEIYNRDNIPMLVGGTGLYINSIIYNYSFTDANKDNDYRDYLEKLAKEKGKEYIHSLLKDIDEYSYNNLHYNNLKRVIRALEVYKVTGKPMSQYAKEEKENLFNIPYSIYYFVLYMDRDKLYDKINMRVDRMLQEGLLDEVKELKEMGCNETMQSMQGIGYKELLYYLNGEISFNEAVYLIKKGSRNYAKRQLTWFRRDPRAIWINKDEFENDDAIVKEILNKFNKLKGF</sequence>
<dbReference type="EC" id="2.5.1.75" evidence="1"/>
<dbReference type="EMBL" id="AE015927">
    <property type="protein sequence ID" value="AAO35866.1"/>
    <property type="molecule type" value="Genomic_DNA"/>
</dbReference>
<dbReference type="RefSeq" id="WP_011099528.1">
    <property type="nucleotide sequence ID" value="NC_004557.1"/>
</dbReference>
<dbReference type="SMR" id="Q895H4"/>
<dbReference type="STRING" id="212717.CTC_01300"/>
<dbReference type="GeneID" id="24254557"/>
<dbReference type="KEGG" id="ctc:CTC_01300"/>
<dbReference type="HOGENOM" id="CLU_032616_0_1_9"/>
<dbReference type="OrthoDB" id="9776390at2"/>
<dbReference type="Proteomes" id="UP000001412">
    <property type="component" value="Chromosome"/>
</dbReference>
<dbReference type="GO" id="GO:0005524">
    <property type="term" value="F:ATP binding"/>
    <property type="evidence" value="ECO:0007669"/>
    <property type="project" value="UniProtKB-UniRule"/>
</dbReference>
<dbReference type="GO" id="GO:0052381">
    <property type="term" value="F:tRNA dimethylallyltransferase activity"/>
    <property type="evidence" value="ECO:0007669"/>
    <property type="project" value="UniProtKB-UniRule"/>
</dbReference>
<dbReference type="GO" id="GO:0006400">
    <property type="term" value="P:tRNA modification"/>
    <property type="evidence" value="ECO:0007669"/>
    <property type="project" value="TreeGrafter"/>
</dbReference>
<dbReference type="FunFam" id="1.10.20.140:FF:000001">
    <property type="entry name" value="tRNA dimethylallyltransferase"/>
    <property type="match status" value="1"/>
</dbReference>
<dbReference type="Gene3D" id="1.10.20.140">
    <property type="match status" value="1"/>
</dbReference>
<dbReference type="Gene3D" id="3.40.50.300">
    <property type="entry name" value="P-loop containing nucleotide triphosphate hydrolases"/>
    <property type="match status" value="1"/>
</dbReference>
<dbReference type="HAMAP" id="MF_00185">
    <property type="entry name" value="IPP_trans"/>
    <property type="match status" value="1"/>
</dbReference>
<dbReference type="InterPro" id="IPR039657">
    <property type="entry name" value="Dimethylallyltransferase"/>
</dbReference>
<dbReference type="InterPro" id="IPR018022">
    <property type="entry name" value="IPT"/>
</dbReference>
<dbReference type="InterPro" id="IPR027417">
    <property type="entry name" value="P-loop_NTPase"/>
</dbReference>
<dbReference type="NCBIfam" id="TIGR00174">
    <property type="entry name" value="miaA"/>
    <property type="match status" value="1"/>
</dbReference>
<dbReference type="PANTHER" id="PTHR11088">
    <property type="entry name" value="TRNA DIMETHYLALLYLTRANSFERASE"/>
    <property type="match status" value="1"/>
</dbReference>
<dbReference type="PANTHER" id="PTHR11088:SF60">
    <property type="entry name" value="TRNA DIMETHYLALLYLTRANSFERASE"/>
    <property type="match status" value="1"/>
</dbReference>
<dbReference type="Pfam" id="PF01715">
    <property type="entry name" value="IPPT"/>
    <property type="match status" value="1"/>
</dbReference>
<dbReference type="SUPFAM" id="SSF52540">
    <property type="entry name" value="P-loop containing nucleoside triphosphate hydrolases"/>
    <property type="match status" value="2"/>
</dbReference>
<proteinExistence type="inferred from homology"/>
<reference key="1">
    <citation type="journal article" date="2003" name="Proc. Natl. Acad. Sci. U.S.A.">
        <title>The genome sequence of Clostridium tetani, the causative agent of tetanus disease.</title>
        <authorList>
            <person name="Brueggemann H."/>
            <person name="Baeumer S."/>
            <person name="Fricke W.F."/>
            <person name="Wiezer A."/>
            <person name="Liesegang H."/>
            <person name="Decker I."/>
            <person name="Herzberg C."/>
            <person name="Martinez-Arias R."/>
            <person name="Merkl R."/>
            <person name="Henne A."/>
            <person name="Gottschalk G."/>
        </authorList>
    </citation>
    <scope>NUCLEOTIDE SEQUENCE [LARGE SCALE GENOMIC DNA]</scope>
    <source>
        <strain>Massachusetts / E88</strain>
    </source>
</reference>
<evidence type="ECO:0000255" key="1">
    <source>
        <dbReference type="HAMAP-Rule" id="MF_00185"/>
    </source>
</evidence>
<organism>
    <name type="scientific">Clostridium tetani (strain Massachusetts / E88)</name>
    <dbReference type="NCBI Taxonomy" id="212717"/>
    <lineage>
        <taxon>Bacteria</taxon>
        <taxon>Bacillati</taxon>
        <taxon>Bacillota</taxon>
        <taxon>Clostridia</taxon>
        <taxon>Eubacteriales</taxon>
        <taxon>Clostridiaceae</taxon>
        <taxon>Clostridium</taxon>
    </lineage>
</organism>
<protein>
    <recommendedName>
        <fullName evidence="1">tRNA dimethylallyltransferase</fullName>
        <ecNumber evidence="1">2.5.1.75</ecNumber>
    </recommendedName>
    <alternativeName>
        <fullName evidence="1">Dimethylallyl diphosphate:tRNA dimethylallyltransferase</fullName>
        <shortName evidence="1">DMAPP:tRNA dimethylallyltransferase</shortName>
        <shortName evidence="1">DMATase</shortName>
    </alternativeName>
    <alternativeName>
        <fullName evidence="1">Isopentenyl-diphosphate:tRNA isopentenyltransferase</fullName>
        <shortName evidence="1">IPP transferase</shortName>
        <shortName evidence="1">IPPT</shortName>
        <shortName evidence="1">IPTase</shortName>
    </alternativeName>
</protein>
<gene>
    <name evidence="1" type="primary">miaA</name>
    <name type="ordered locus">CTC_01300</name>
</gene>
<accession>Q895H4</accession>
<keyword id="KW-0067">ATP-binding</keyword>
<keyword id="KW-0460">Magnesium</keyword>
<keyword id="KW-0547">Nucleotide-binding</keyword>
<keyword id="KW-1185">Reference proteome</keyword>
<keyword id="KW-0808">Transferase</keyword>
<keyword id="KW-0819">tRNA processing</keyword>